<keyword id="KW-0378">Hydrolase</keyword>
<keyword id="KW-0511">Multifunctional enzyme</keyword>
<keyword id="KW-0658">Purine biosynthesis</keyword>
<keyword id="KW-0808">Transferase</keyword>
<organism>
    <name type="scientific">Streptococcus pyogenes serotype M18 (strain MGAS8232)</name>
    <dbReference type="NCBI Taxonomy" id="186103"/>
    <lineage>
        <taxon>Bacteria</taxon>
        <taxon>Bacillati</taxon>
        <taxon>Bacillota</taxon>
        <taxon>Bacilli</taxon>
        <taxon>Lactobacillales</taxon>
        <taxon>Streptococcaceae</taxon>
        <taxon>Streptococcus</taxon>
    </lineage>
</organism>
<gene>
    <name evidence="1" type="primary">purH</name>
    <name type="ordered locus">spyM18_0030</name>
</gene>
<protein>
    <recommendedName>
        <fullName evidence="1">Bifunctional purine biosynthesis protein PurH</fullName>
    </recommendedName>
    <domain>
        <recommendedName>
            <fullName evidence="1">Phosphoribosylaminoimidazolecarboxamide formyltransferase</fullName>
            <ecNumber evidence="1">2.1.2.3</ecNumber>
        </recommendedName>
        <alternativeName>
            <fullName evidence="1">AICAR transformylase</fullName>
        </alternativeName>
    </domain>
    <domain>
        <recommendedName>
            <fullName evidence="1">IMP cyclohydrolase</fullName>
            <ecNumber evidence="1">3.5.4.10</ecNumber>
        </recommendedName>
        <alternativeName>
            <fullName evidence="1">ATIC</fullName>
        </alternativeName>
        <alternativeName>
            <fullName evidence="1">IMP synthase</fullName>
        </alternativeName>
        <alternativeName>
            <fullName evidence="1">Inosinicase</fullName>
        </alternativeName>
    </domain>
</protein>
<feature type="chain" id="PRO_0000192138" description="Bifunctional purine biosynthesis protein PurH">
    <location>
        <begin position="1"/>
        <end position="515"/>
    </location>
</feature>
<feature type="domain" description="MGS-like" evidence="2">
    <location>
        <begin position="1"/>
        <end position="145"/>
    </location>
</feature>
<accession>Q8P310</accession>
<evidence type="ECO:0000255" key="1">
    <source>
        <dbReference type="HAMAP-Rule" id="MF_00139"/>
    </source>
</evidence>
<evidence type="ECO:0000255" key="2">
    <source>
        <dbReference type="PROSITE-ProRule" id="PRU01202"/>
    </source>
</evidence>
<comment type="catalytic activity">
    <reaction evidence="1">
        <text>(6R)-10-formyltetrahydrofolate + 5-amino-1-(5-phospho-beta-D-ribosyl)imidazole-4-carboxamide = 5-formamido-1-(5-phospho-D-ribosyl)imidazole-4-carboxamide + (6S)-5,6,7,8-tetrahydrofolate</text>
        <dbReference type="Rhea" id="RHEA:22192"/>
        <dbReference type="ChEBI" id="CHEBI:57453"/>
        <dbReference type="ChEBI" id="CHEBI:58467"/>
        <dbReference type="ChEBI" id="CHEBI:58475"/>
        <dbReference type="ChEBI" id="CHEBI:195366"/>
        <dbReference type="EC" id="2.1.2.3"/>
    </reaction>
</comment>
<comment type="catalytic activity">
    <reaction evidence="1">
        <text>IMP + H2O = 5-formamido-1-(5-phospho-D-ribosyl)imidazole-4-carboxamide</text>
        <dbReference type="Rhea" id="RHEA:18445"/>
        <dbReference type="ChEBI" id="CHEBI:15377"/>
        <dbReference type="ChEBI" id="CHEBI:58053"/>
        <dbReference type="ChEBI" id="CHEBI:58467"/>
        <dbReference type="EC" id="3.5.4.10"/>
    </reaction>
</comment>
<comment type="pathway">
    <text evidence="1">Purine metabolism; IMP biosynthesis via de novo pathway; 5-formamido-1-(5-phospho-D-ribosyl)imidazole-4-carboxamide from 5-amino-1-(5-phospho-D-ribosyl)imidazole-4-carboxamide (10-formyl THF route): step 1/1.</text>
</comment>
<comment type="pathway">
    <text evidence="1">Purine metabolism; IMP biosynthesis via de novo pathway; IMP from 5-formamido-1-(5-phospho-D-ribosyl)imidazole-4-carboxamide: step 1/1.</text>
</comment>
<comment type="domain">
    <text evidence="1">The IMP cyclohydrolase activity resides in the N-terminal region.</text>
</comment>
<comment type="similarity">
    <text evidence="1">Belongs to the PurH family.</text>
</comment>
<sequence length="515" mass="56175">MTKRALISVSDKSGIIDFAKELKNLGWDIISTGGTKVALDNAGVETIAIDDVTGFPEMMDGRVKTLHPNIHGGLLARRDVDSHLQAAKDNNIELIDLVVINLYPFKETILRPDVTYDLAVENIDIGGPSMLRSAAKNHASVTVVVDPADYATVLGELADAGQTTFETRQRLAAKVFRHTAAYDALIAEYFTAQVGEAKPEKLTITYDLKQAMRYGENPQQDADFYQKALPTDYSIASAKQLNGKELSFNNIRDADAAIRIIRDFKDRPTVIALKHMNPCGIGQADDIETAWDYAYEADPVSIFGGIVVLNREVDAATAKKMHPIFLEIIIAPSYSEEALAILTNKKKNLRILELPFDAQAASEVEAEYTGVVGGLLVQNQDVVAENPSDWQVVTDRQPTEQEATALEFAWKAIKYVKSNGIIITNDHMTLGLGAGQTNRVGSVKIAIEQAKDHLDGAVLASDAFFPFADNIEEVAAAGVKAIIQPGGSVRDQDSIDAANKHGLTMIFTGVRHFRH</sequence>
<name>PUR9_STRP8</name>
<proteinExistence type="inferred from homology"/>
<dbReference type="EC" id="2.1.2.3" evidence="1"/>
<dbReference type="EC" id="3.5.4.10" evidence="1"/>
<dbReference type="EMBL" id="AE009949">
    <property type="protein sequence ID" value="AAL96859.1"/>
    <property type="molecule type" value="Genomic_DNA"/>
</dbReference>
<dbReference type="RefSeq" id="WP_011017232.1">
    <property type="nucleotide sequence ID" value="NC_003485.1"/>
</dbReference>
<dbReference type="SMR" id="Q8P310"/>
<dbReference type="KEGG" id="spm:spyM18_0030"/>
<dbReference type="HOGENOM" id="CLU_016316_5_2_9"/>
<dbReference type="UniPathway" id="UPA00074">
    <property type="reaction ID" value="UER00133"/>
</dbReference>
<dbReference type="UniPathway" id="UPA00074">
    <property type="reaction ID" value="UER00135"/>
</dbReference>
<dbReference type="GO" id="GO:0005829">
    <property type="term" value="C:cytosol"/>
    <property type="evidence" value="ECO:0007669"/>
    <property type="project" value="TreeGrafter"/>
</dbReference>
<dbReference type="GO" id="GO:0003937">
    <property type="term" value="F:IMP cyclohydrolase activity"/>
    <property type="evidence" value="ECO:0007669"/>
    <property type="project" value="UniProtKB-UniRule"/>
</dbReference>
<dbReference type="GO" id="GO:0004643">
    <property type="term" value="F:phosphoribosylaminoimidazolecarboxamide formyltransferase activity"/>
    <property type="evidence" value="ECO:0007669"/>
    <property type="project" value="UniProtKB-UniRule"/>
</dbReference>
<dbReference type="GO" id="GO:0006189">
    <property type="term" value="P:'de novo' IMP biosynthetic process"/>
    <property type="evidence" value="ECO:0007669"/>
    <property type="project" value="UniProtKB-UniRule"/>
</dbReference>
<dbReference type="CDD" id="cd01421">
    <property type="entry name" value="IMPCH"/>
    <property type="match status" value="1"/>
</dbReference>
<dbReference type="FunFam" id="3.40.140.20:FF:000001">
    <property type="entry name" value="Bifunctional purine biosynthesis protein PurH"/>
    <property type="match status" value="1"/>
</dbReference>
<dbReference type="FunFam" id="3.40.140.20:FF:000002">
    <property type="entry name" value="Bifunctional purine biosynthesis protein PurH"/>
    <property type="match status" value="1"/>
</dbReference>
<dbReference type="FunFam" id="3.40.50.1380:FF:000001">
    <property type="entry name" value="Bifunctional purine biosynthesis protein PurH"/>
    <property type="match status" value="1"/>
</dbReference>
<dbReference type="Gene3D" id="3.40.140.20">
    <property type="match status" value="2"/>
</dbReference>
<dbReference type="Gene3D" id="3.40.50.1380">
    <property type="entry name" value="Methylglyoxal synthase-like domain"/>
    <property type="match status" value="1"/>
</dbReference>
<dbReference type="HAMAP" id="MF_00139">
    <property type="entry name" value="PurH"/>
    <property type="match status" value="1"/>
</dbReference>
<dbReference type="InterPro" id="IPR024051">
    <property type="entry name" value="AICAR_Tfase_dup_dom_sf"/>
</dbReference>
<dbReference type="InterPro" id="IPR016193">
    <property type="entry name" value="Cytidine_deaminase-like"/>
</dbReference>
<dbReference type="InterPro" id="IPR011607">
    <property type="entry name" value="MGS-like_dom"/>
</dbReference>
<dbReference type="InterPro" id="IPR036914">
    <property type="entry name" value="MGS-like_dom_sf"/>
</dbReference>
<dbReference type="InterPro" id="IPR002695">
    <property type="entry name" value="PurH-like"/>
</dbReference>
<dbReference type="NCBIfam" id="NF002049">
    <property type="entry name" value="PRK00881.1"/>
    <property type="match status" value="1"/>
</dbReference>
<dbReference type="NCBIfam" id="TIGR00355">
    <property type="entry name" value="purH"/>
    <property type="match status" value="1"/>
</dbReference>
<dbReference type="PANTHER" id="PTHR11692:SF0">
    <property type="entry name" value="BIFUNCTIONAL PURINE BIOSYNTHESIS PROTEIN ATIC"/>
    <property type="match status" value="1"/>
</dbReference>
<dbReference type="PANTHER" id="PTHR11692">
    <property type="entry name" value="BIFUNCTIONAL PURINE BIOSYNTHESIS PROTEIN PURH"/>
    <property type="match status" value="1"/>
</dbReference>
<dbReference type="Pfam" id="PF01808">
    <property type="entry name" value="AICARFT_IMPCHas"/>
    <property type="match status" value="1"/>
</dbReference>
<dbReference type="Pfam" id="PF02142">
    <property type="entry name" value="MGS"/>
    <property type="match status" value="1"/>
</dbReference>
<dbReference type="PIRSF" id="PIRSF000414">
    <property type="entry name" value="AICARFT_IMPCHas"/>
    <property type="match status" value="1"/>
</dbReference>
<dbReference type="SMART" id="SM00798">
    <property type="entry name" value="AICARFT_IMPCHas"/>
    <property type="match status" value="1"/>
</dbReference>
<dbReference type="SMART" id="SM00851">
    <property type="entry name" value="MGS"/>
    <property type="match status" value="1"/>
</dbReference>
<dbReference type="SUPFAM" id="SSF53927">
    <property type="entry name" value="Cytidine deaminase-like"/>
    <property type="match status" value="1"/>
</dbReference>
<dbReference type="SUPFAM" id="SSF52335">
    <property type="entry name" value="Methylglyoxal synthase-like"/>
    <property type="match status" value="1"/>
</dbReference>
<dbReference type="PROSITE" id="PS51855">
    <property type="entry name" value="MGS"/>
    <property type="match status" value="1"/>
</dbReference>
<reference key="1">
    <citation type="journal article" date="2002" name="Proc. Natl. Acad. Sci. U.S.A.">
        <title>Genome sequence and comparative microarray analysis of serotype M18 group A Streptococcus strains associated with acute rheumatic fever outbreaks.</title>
        <authorList>
            <person name="Smoot J.C."/>
            <person name="Barbian K.D."/>
            <person name="Van Gompel J.J."/>
            <person name="Smoot L.M."/>
            <person name="Chaussee M.S."/>
            <person name="Sylva G.L."/>
            <person name="Sturdevant D.E."/>
            <person name="Ricklefs S.M."/>
            <person name="Porcella S.F."/>
            <person name="Parkins L.D."/>
            <person name="Beres S.B."/>
            <person name="Campbell D.S."/>
            <person name="Smith T.M."/>
            <person name="Zhang Q."/>
            <person name="Kapur V."/>
            <person name="Daly J.A."/>
            <person name="Veasy L.G."/>
            <person name="Musser J.M."/>
        </authorList>
    </citation>
    <scope>NUCLEOTIDE SEQUENCE [LARGE SCALE GENOMIC DNA]</scope>
    <source>
        <strain>MGAS8232</strain>
    </source>
</reference>